<accession>A1UTC2</accession>
<name>DDL_BARBK</name>
<protein>
    <recommendedName>
        <fullName evidence="2">D-alanine--D-alanine ligase</fullName>
        <ecNumber evidence="2">6.3.2.4</ecNumber>
    </recommendedName>
    <alternativeName>
        <fullName evidence="2">D-Ala-D-Ala ligase</fullName>
    </alternativeName>
    <alternativeName>
        <fullName evidence="2">D-alanylalanine synthetase</fullName>
    </alternativeName>
</protein>
<keyword id="KW-0067">ATP-binding</keyword>
<keyword id="KW-0133">Cell shape</keyword>
<keyword id="KW-0961">Cell wall biogenesis/degradation</keyword>
<keyword id="KW-0963">Cytoplasm</keyword>
<keyword id="KW-0436">Ligase</keyword>
<keyword id="KW-0460">Magnesium</keyword>
<keyword id="KW-0464">Manganese</keyword>
<keyword id="KW-0479">Metal-binding</keyword>
<keyword id="KW-0547">Nucleotide-binding</keyword>
<keyword id="KW-0573">Peptidoglycan synthesis</keyword>
<proteinExistence type="inferred from homology"/>
<evidence type="ECO:0000250" key="1"/>
<evidence type="ECO:0000255" key="2">
    <source>
        <dbReference type="HAMAP-Rule" id="MF_00047"/>
    </source>
</evidence>
<organism>
    <name type="scientific">Bartonella bacilliformis (strain ATCC 35685 / KC583 / Herrer 020/F12,63)</name>
    <dbReference type="NCBI Taxonomy" id="360095"/>
    <lineage>
        <taxon>Bacteria</taxon>
        <taxon>Pseudomonadati</taxon>
        <taxon>Pseudomonadota</taxon>
        <taxon>Alphaproteobacteria</taxon>
        <taxon>Hyphomicrobiales</taxon>
        <taxon>Bartonellaceae</taxon>
        <taxon>Bartonella</taxon>
    </lineage>
</organism>
<feature type="chain" id="PRO_1000030428" description="D-alanine--D-alanine ligase">
    <location>
        <begin position="1"/>
        <end position="306"/>
    </location>
</feature>
<feature type="domain" description="ATP-grasp" evidence="2">
    <location>
        <begin position="102"/>
        <end position="300"/>
    </location>
</feature>
<feature type="binding site" evidence="2">
    <location>
        <begin position="128"/>
        <end position="183"/>
    </location>
    <ligand>
        <name>ATP</name>
        <dbReference type="ChEBI" id="CHEBI:30616"/>
    </ligand>
</feature>
<feature type="binding site" evidence="2">
    <location>
        <position position="253"/>
    </location>
    <ligand>
        <name>Mg(2+)</name>
        <dbReference type="ChEBI" id="CHEBI:18420"/>
        <label>1</label>
    </ligand>
</feature>
<feature type="binding site" evidence="2">
    <location>
        <position position="267"/>
    </location>
    <ligand>
        <name>Mg(2+)</name>
        <dbReference type="ChEBI" id="CHEBI:18420"/>
        <label>1</label>
    </ligand>
</feature>
<feature type="binding site" evidence="2">
    <location>
        <position position="267"/>
    </location>
    <ligand>
        <name>Mg(2+)</name>
        <dbReference type="ChEBI" id="CHEBI:18420"/>
        <label>2</label>
    </ligand>
</feature>
<feature type="binding site" evidence="2">
    <location>
        <position position="269"/>
    </location>
    <ligand>
        <name>Mg(2+)</name>
        <dbReference type="ChEBI" id="CHEBI:18420"/>
        <label>2</label>
    </ligand>
</feature>
<reference key="1">
    <citation type="submission" date="2006-12" db="EMBL/GenBank/DDBJ databases">
        <authorList>
            <person name="Hendrix L."/>
            <person name="Mohamoud Y."/>
            <person name="Radune D."/>
            <person name="Shvartsbeyn A."/>
            <person name="Daugherty S."/>
            <person name="Dodson R."/>
            <person name="Durkin A.S."/>
            <person name="Harkins D."/>
            <person name="Huot H."/>
            <person name="Kothari S.P."/>
            <person name="Madupu R."/>
            <person name="Li J."/>
            <person name="Nelson W.C."/>
            <person name="Shrivastava S."/>
            <person name="Giglio M.G."/>
            <person name="Haft D."/>
            <person name="Selengut J."/>
            <person name="Fraser-Ligget C."/>
            <person name="Seshadri R."/>
        </authorList>
    </citation>
    <scope>NUCLEOTIDE SEQUENCE [LARGE SCALE GENOMIC DNA]</scope>
    <source>
        <strain>ATCC 35685 / KC583 / Herrer 020/F12,63</strain>
    </source>
</reference>
<comment type="function">
    <text evidence="2">Cell wall formation.</text>
</comment>
<comment type="catalytic activity">
    <reaction evidence="2">
        <text>2 D-alanine + ATP = D-alanyl-D-alanine + ADP + phosphate + H(+)</text>
        <dbReference type="Rhea" id="RHEA:11224"/>
        <dbReference type="ChEBI" id="CHEBI:15378"/>
        <dbReference type="ChEBI" id="CHEBI:30616"/>
        <dbReference type="ChEBI" id="CHEBI:43474"/>
        <dbReference type="ChEBI" id="CHEBI:57416"/>
        <dbReference type="ChEBI" id="CHEBI:57822"/>
        <dbReference type="ChEBI" id="CHEBI:456216"/>
        <dbReference type="EC" id="6.3.2.4"/>
    </reaction>
</comment>
<comment type="cofactor">
    <cofactor evidence="1">
        <name>Mg(2+)</name>
        <dbReference type="ChEBI" id="CHEBI:18420"/>
    </cofactor>
    <cofactor evidence="1">
        <name>Mn(2+)</name>
        <dbReference type="ChEBI" id="CHEBI:29035"/>
    </cofactor>
    <text evidence="1">Binds 2 magnesium or manganese ions per subunit.</text>
</comment>
<comment type="pathway">
    <text evidence="2">Cell wall biogenesis; peptidoglycan biosynthesis.</text>
</comment>
<comment type="subcellular location">
    <subcellularLocation>
        <location evidence="2">Cytoplasm</location>
    </subcellularLocation>
</comment>
<comment type="similarity">
    <text evidence="2">Belongs to the D-alanine--D-alanine ligase family.</text>
</comment>
<sequence length="306" mass="33432">MTGKHVTVLMGGWSSERSVSLSSGTACADILEAQGYNVVRVDVDDRIVSVLEELRPTTVFNALHGPFGEDGCIQGILEYLKIPYTHSGVMASALAMDKGRAKIIAASAGVSVAPSCVMSRFSLGAEHPMKPPYVIKPIREGSSFGVVIVGSDETMPLHDIMNNEWVYDDEIMVEKYVPGRELTCAVLGDEVLDVCEIVPKECFQFYDYDSKYKSGGSLHICPAKLSSNIYQNVQRMSLAAHQAIGCRGVSRSDFRFNEETGELIWLEINTQPGMTSTSLVPDIAKASGRTYGDIVKWIVEDASCMR</sequence>
<dbReference type="EC" id="6.3.2.4" evidence="2"/>
<dbReference type="EMBL" id="CP000524">
    <property type="protein sequence ID" value="ABM45252.1"/>
    <property type="molecule type" value="Genomic_DNA"/>
</dbReference>
<dbReference type="RefSeq" id="WP_005767425.1">
    <property type="nucleotide sequence ID" value="NC_008783.1"/>
</dbReference>
<dbReference type="SMR" id="A1UTC2"/>
<dbReference type="STRING" id="360095.BARBAKC583_0944"/>
<dbReference type="GeneID" id="4684804"/>
<dbReference type="KEGG" id="bbk:BARBAKC583_0944"/>
<dbReference type="eggNOG" id="COG1181">
    <property type="taxonomic scope" value="Bacteria"/>
</dbReference>
<dbReference type="HOGENOM" id="CLU_039268_1_1_5"/>
<dbReference type="OrthoDB" id="9813261at2"/>
<dbReference type="UniPathway" id="UPA00219"/>
<dbReference type="Proteomes" id="UP000000643">
    <property type="component" value="Chromosome"/>
</dbReference>
<dbReference type="GO" id="GO:0005737">
    <property type="term" value="C:cytoplasm"/>
    <property type="evidence" value="ECO:0007669"/>
    <property type="project" value="UniProtKB-SubCell"/>
</dbReference>
<dbReference type="GO" id="GO:0005524">
    <property type="term" value="F:ATP binding"/>
    <property type="evidence" value="ECO:0007669"/>
    <property type="project" value="UniProtKB-KW"/>
</dbReference>
<dbReference type="GO" id="GO:0008716">
    <property type="term" value="F:D-alanine-D-alanine ligase activity"/>
    <property type="evidence" value="ECO:0007669"/>
    <property type="project" value="UniProtKB-UniRule"/>
</dbReference>
<dbReference type="GO" id="GO:0046872">
    <property type="term" value="F:metal ion binding"/>
    <property type="evidence" value="ECO:0007669"/>
    <property type="project" value="UniProtKB-KW"/>
</dbReference>
<dbReference type="GO" id="GO:0071555">
    <property type="term" value="P:cell wall organization"/>
    <property type="evidence" value="ECO:0007669"/>
    <property type="project" value="UniProtKB-KW"/>
</dbReference>
<dbReference type="GO" id="GO:0009252">
    <property type="term" value="P:peptidoglycan biosynthetic process"/>
    <property type="evidence" value="ECO:0007669"/>
    <property type="project" value="UniProtKB-UniRule"/>
</dbReference>
<dbReference type="GO" id="GO:0008360">
    <property type="term" value="P:regulation of cell shape"/>
    <property type="evidence" value="ECO:0007669"/>
    <property type="project" value="UniProtKB-KW"/>
</dbReference>
<dbReference type="Gene3D" id="3.40.50.20">
    <property type="match status" value="1"/>
</dbReference>
<dbReference type="Gene3D" id="3.30.1490.20">
    <property type="entry name" value="ATP-grasp fold, A domain"/>
    <property type="match status" value="1"/>
</dbReference>
<dbReference type="Gene3D" id="3.30.470.20">
    <property type="entry name" value="ATP-grasp fold, B domain"/>
    <property type="match status" value="1"/>
</dbReference>
<dbReference type="HAMAP" id="MF_00047">
    <property type="entry name" value="Dala_Dala_lig"/>
    <property type="match status" value="1"/>
</dbReference>
<dbReference type="InterPro" id="IPR011761">
    <property type="entry name" value="ATP-grasp"/>
</dbReference>
<dbReference type="InterPro" id="IPR013815">
    <property type="entry name" value="ATP_grasp_subdomain_1"/>
</dbReference>
<dbReference type="InterPro" id="IPR000291">
    <property type="entry name" value="D-Ala_lig_Van_CS"/>
</dbReference>
<dbReference type="InterPro" id="IPR005905">
    <property type="entry name" value="D_ala_D_ala"/>
</dbReference>
<dbReference type="InterPro" id="IPR011095">
    <property type="entry name" value="Dala_Dala_lig_C"/>
</dbReference>
<dbReference type="InterPro" id="IPR011127">
    <property type="entry name" value="Dala_Dala_lig_N"/>
</dbReference>
<dbReference type="InterPro" id="IPR016185">
    <property type="entry name" value="PreATP-grasp_dom_sf"/>
</dbReference>
<dbReference type="NCBIfam" id="TIGR01205">
    <property type="entry name" value="D_ala_D_alaTIGR"/>
    <property type="match status" value="1"/>
</dbReference>
<dbReference type="NCBIfam" id="NF002378">
    <property type="entry name" value="PRK01372.1"/>
    <property type="match status" value="1"/>
</dbReference>
<dbReference type="PANTHER" id="PTHR23132">
    <property type="entry name" value="D-ALANINE--D-ALANINE LIGASE"/>
    <property type="match status" value="1"/>
</dbReference>
<dbReference type="PANTHER" id="PTHR23132:SF23">
    <property type="entry name" value="D-ALANINE--D-ALANINE LIGASE B"/>
    <property type="match status" value="1"/>
</dbReference>
<dbReference type="Pfam" id="PF07478">
    <property type="entry name" value="Dala_Dala_lig_C"/>
    <property type="match status" value="1"/>
</dbReference>
<dbReference type="Pfam" id="PF01820">
    <property type="entry name" value="Dala_Dala_lig_N"/>
    <property type="match status" value="1"/>
</dbReference>
<dbReference type="PIRSF" id="PIRSF039102">
    <property type="entry name" value="Ddl/VanB"/>
    <property type="match status" value="1"/>
</dbReference>
<dbReference type="SUPFAM" id="SSF56059">
    <property type="entry name" value="Glutathione synthetase ATP-binding domain-like"/>
    <property type="match status" value="1"/>
</dbReference>
<dbReference type="SUPFAM" id="SSF52440">
    <property type="entry name" value="PreATP-grasp domain"/>
    <property type="match status" value="1"/>
</dbReference>
<dbReference type="PROSITE" id="PS50975">
    <property type="entry name" value="ATP_GRASP"/>
    <property type="match status" value="1"/>
</dbReference>
<dbReference type="PROSITE" id="PS00843">
    <property type="entry name" value="DALA_DALA_LIGASE_1"/>
    <property type="match status" value="1"/>
</dbReference>
<dbReference type="PROSITE" id="PS00844">
    <property type="entry name" value="DALA_DALA_LIGASE_2"/>
    <property type="match status" value="1"/>
</dbReference>
<gene>
    <name evidence="2" type="primary">ddl</name>
    <name type="ordered locus">BARBAKC583_0944</name>
</gene>